<geneLocation type="plasmid">
    <name>sym pRL1JI</name>
</geneLocation>
<proteinExistence type="inferred from homology"/>
<dbReference type="EMBL" id="X17285">
    <property type="protein sequence ID" value="CAA35177.1"/>
    <property type="molecule type" value="Genomic_DNA"/>
</dbReference>
<dbReference type="PIR" id="S08384">
    <property type="entry name" value="S08384"/>
</dbReference>
<dbReference type="PIR" id="S10133">
    <property type="entry name" value="S10133"/>
</dbReference>
<dbReference type="RefSeq" id="WP_011654218.1">
    <property type="nucleotide sequence ID" value="NZ_WIFA01000003.1"/>
</dbReference>
<dbReference type="SMR" id="P15727"/>
<dbReference type="OMA" id="ITWAAFD"/>
<dbReference type="GO" id="GO:0005886">
    <property type="term" value="C:plasma membrane"/>
    <property type="evidence" value="ECO:0007669"/>
    <property type="project" value="UniProtKB-SubCell"/>
</dbReference>
<dbReference type="GO" id="GO:0015562">
    <property type="term" value="F:efflux transmembrane transporter activity"/>
    <property type="evidence" value="ECO:0007669"/>
    <property type="project" value="InterPro"/>
</dbReference>
<dbReference type="Gene3D" id="1.20.1600.10">
    <property type="entry name" value="Outer membrane efflux proteins (OEP)"/>
    <property type="match status" value="1"/>
</dbReference>
<dbReference type="Gene3D" id="2.20.200.10">
    <property type="entry name" value="Outer membrane efflux proteins (OEP)"/>
    <property type="match status" value="1"/>
</dbReference>
<dbReference type="InterPro" id="IPR050737">
    <property type="entry name" value="OMF"/>
</dbReference>
<dbReference type="InterPro" id="IPR003423">
    <property type="entry name" value="OMP_efflux"/>
</dbReference>
<dbReference type="InterPro" id="IPR010131">
    <property type="entry name" value="RND_efflux_OM_lipoprot_NodT"/>
</dbReference>
<dbReference type="NCBIfam" id="TIGR01845">
    <property type="entry name" value="outer_NodT"/>
    <property type="match status" value="1"/>
</dbReference>
<dbReference type="PANTHER" id="PTHR30203">
    <property type="entry name" value="OUTER MEMBRANE CATION EFFLUX PROTEIN"/>
    <property type="match status" value="1"/>
</dbReference>
<dbReference type="Pfam" id="PF02321">
    <property type="entry name" value="OEP"/>
    <property type="match status" value="2"/>
</dbReference>
<dbReference type="SUPFAM" id="SSF56954">
    <property type="entry name" value="Outer membrane efflux proteins (OEP)"/>
    <property type="match status" value="1"/>
</dbReference>
<dbReference type="PROSITE" id="PS51257">
    <property type="entry name" value="PROKAR_LIPOPROTEIN"/>
    <property type="match status" value="1"/>
</dbReference>
<comment type="subcellular location">
    <subcellularLocation>
        <location evidence="1">Cell membrane</location>
        <topology evidence="1">Lipid-anchor</topology>
    </subcellularLocation>
</comment>
<comment type="similarity">
    <text evidence="2">Belongs to the outer membrane factor (OMF) (TC 1.B.17) family.</text>
</comment>
<protein>
    <recommendedName>
        <fullName>Nodulation protein T</fullName>
    </recommendedName>
</protein>
<accession>P15727</accession>
<keyword id="KW-1003">Cell membrane</keyword>
<keyword id="KW-0449">Lipoprotein</keyword>
<keyword id="KW-0472">Membrane</keyword>
<keyword id="KW-0536">Nodulation</keyword>
<keyword id="KW-0564">Palmitate</keyword>
<keyword id="KW-0614">Plasmid</keyword>
<keyword id="KW-0732">Signal</keyword>
<keyword id="KW-0812">Transmembrane</keyword>
<keyword id="KW-1134">Transmembrane beta strand</keyword>
<gene>
    <name type="primary">nodT</name>
</gene>
<feature type="signal peptide" evidence="1">
    <location>
        <begin position="1"/>
        <end position="17"/>
    </location>
</feature>
<feature type="chain" id="PRO_0000030997" description="Nodulation protein T">
    <location>
        <begin position="18"/>
        <end position="482"/>
    </location>
</feature>
<feature type="lipid moiety-binding region" description="N-palmitoyl cysteine" evidence="1">
    <location>
        <position position="18"/>
    </location>
</feature>
<feature type="lipid moiety-binding region" description="S-diacylglycerol cysteine" evidence="1">
    <location>
        <position position="18"/>
    </location>
</feature>
<evidence type="ECO:0000255" key="1">
    <source>
        <dbReference type="PROSITE-ProRule" id="PRU00303"/>
    </source>
</evidence>
<evidence type="ECO:0000305" key="2"/>
<reference key="1">
    <citation type="journal article" date="1990" name="EMBO J.">
        <title>The Rhizobium nodulation gene nodO encodes a Ca2(+)-binding protein that is exported without N-terminal cleavage and is homologous to haemolysin and related proteins.</title>
        <authorList>
            <person name="Economou A."/>
            <person name="Hamilton W.D.O."/>
            <person name="Johnston A.W.B."/>
            <person name="Downie J.A."/>
        </authorList>
    </citation>
    <scope>NUCLEOTIDE SEQUENCE [GENOMIC DNA]</scope>
    <source>
        <strain>8401</strain>
    </source>
</reference>
<reference key="2">
    <citation type="journal article" date="1990" name="Mol. Microbiol.">
        <title>Molecular characterization of the nodulation gene, nodT, from two biovars of Rhizobium leguminosarum.</title>
        <authorList>
            <person name="Surin B.P."/>
            <person name="Watson J.M."/>
            <person name="Hamilton W.D.O."/>
            <person name="Economou A."/>
            <person name="Downie J.A."/>
        </authorList>
    </citation>
    <scope>NUCLEOTIDE SEQUENCE [GENOMIC DNA]</scope>
</reference>
<organism>
    <name type="scientific">Rhizobium leguminosarum bv. viciae</name>
    <dbReference type="NCBI Taxonomy" id="387"/>
    <lineage>
        <taxon>Bacteria</taxon>
        <taxon>Pseudomonadati</taxon>
        <taxon>Pseudomonadota</taxon>
        <taxon>Alphaproteobacteria</taxon>
        <taxon>Hyphomicrobiales</taxon>
        <taxon>Rhizobiaceae</taxon>
        <taxon>Rhizobium/Agrobacterium group</taxon>
        <taxon>Rhizobium</taxon>
    </lineage>
</organism>
<sequence length="482" mass="51489">MHSFRLAAAVLPLLLSSCMLGPDHAPPETPLPEKFSEGAKQSAGDVAVSAWWDSFSDRTLNQYVASGLDENLSVQQALERVNAAAADVTIAGAGGLPKASHTTSGEIGKGGDITSTQNISSVQLSLTWLLDVFGQYRRSTESALASLDSAHAAVDAAKLALIKDLVSSYIDARYYQQRVSISRANLKSRQETYDFTNLQVEAGAASRQDVLQAEGLVRSTIAEIPRLELNFRVSAHHIAALLALPSETVIKQLQKSEGQPVYRGKINAGIPADLIRNRFDIRQAERDLAAATAQIGVAEAQLYPAITLSGSITPSYIKQRGRHGGILKWSFGPSLDLPILDGGRLRANVETSKSDAAAAYISWKLTVLTAVQEVEDALTAVRRDVHTENSRRRQVETIEEALKLSTASYTDGASSLLDVLEAQRQVSSAQASLAAAIQQLAKDHVRLNVAIRGGFAAPKVASPREASTVAAANANIQSAHSP</sequence>
<name>NODT_RHILV</name>